<evidence type="ECO:0000255" key="1">
    <source>
        <dbReference type="HAMAP-Rule" id="MF_01480"/>
    </source>
</evidence>
<evidence type="ECO:0000255" key="2">
    <source>
        <dbReference type="PROSITE-ProRule" id="PRU01085"/>
    </source>
</evidence>
<evidence type="ECO:0000269" key="3">
    <source>
    </source>
</evidence>
<evidence type="ECO:0000305" key="4"/>
<evidence type="ECO:0000305" key="5">
    <source>
    </source>
</evidence>
<evidence type="ECO:0000305" key="6">
    <source>
    </source>
</evidence>
<feature type="chain" id="PRO_0000429988" description="CRISPR-associated endonuclease Cas9">
    <location>
        <begin position="1"/>
        <end position="1345"/>
    </location>
</feature>
<feature type="domain" description="HNH Cas9-type" evidence="2">
    <location>
        <begin position="770"/>
        <end position="921"/>
    </location>
</feature>
<feature type="active site" description="For RuvC-like nuclease domain" evidence="1">
    <location>
        <position position="10"/>
    </location>
</feature>
<feature type="active site" description="Proton acceptor for HNH nuclease domain" evidence="1">
    <location>
        <position position="840"/>
    </location>
</feature>
<feature type="binding site" evidence="1">
    <location>
        <position position="10"/>
    </location>
    <ligand>
        <name>Mg(2+)</name>
        <dbReference type="ChEBI" id="CHEBI:18420"/>
        <label>1</label>
    </ligand>
</feature>
<feature type="binding site" evidence="1">
    <location>
        <position position="10"/>
    </location>
    <ligand>
        <name>Mg(2+)</name>
        <dbReference type="ChEBI" id="CHEBI:18420"/>
        <label>2</label>
    </ligand>
</feature>
<feature type="binding site" evidence="1">
    <location>
        <position position="762"/>
    </location>
    <ligand>
        <name>Mg(2+)</name>
        <dbReference type="ChEBI" id="CHEBI:18420"/>
        <label>1</label>
    </ligand>
</feature>
<feature type="binding site" evidence="1">
    <location>
        <position position="766"/>
    </location>
    <ligand>
        <name>Mg(2+)</name>
        <dbReference type="ChEBI" id="CHEBI:18420"/>
        <label>1</label>
    </ligand>
</feature>
<feature type="binding site" evidence="1">
    <location>
        <position position="766"/>
    </location>
    <ligand>
        <name>Mg(2+)</name>
        <dbReference type="ChEBI" id="CHEBI:18420"/>
        <label>2</label>
    </ligand>
</feature>
<feature type="binding site" evidence="1">
    <location>
        <position position="983"/>
    </location>
    <ligand>
        <name>Mg(2+)</name>
        <dbReference type="ChEBI" id="CHEBI:18420"/>
        <label>2</label>
    </ligand>
</feature>
<dbReference type="EC" id="3.1.-.-" evidence="1"/>
<dbReference type="EMBL" id="AE014133">
    <property type="protein sequence ID" value="AAN59070.1"/>
    <property type="molecule type" value="Genomic_DNA"/>
</dbReference>
<dbReference type="RefSeq" id="NP_721764.1">
    <property type="nucleotide sequence ID" value="NC_004350.2"/>
</dbReference>
<dbReference type="RefSeq" id="WP_002263549.1">
    <property type="nucleotide sequence ID" value="NC_004350.2"/>
</dbReference>
<dbReference type="SMR" id="Q8DTE3"/>
<dbReference type="STRING" id="210007.SMU_1405c"/>
<dbReference type="KEGG" id="smu:SMU_1405c"/>
<dbReference type="PATRIC" id="fig|210007.7.peg.1250"/>
<dbReference type="eggNOG" id="COG3513">
    <property type="taxonomic scope" value="Bacteria"/>
</dbReference>
<dbReference type="HOGENOM" id="CLU_005604_0_0_9"/>
<dbReference type="OrthoDB" id="9757607at2"/>
<dbReference type="Proteomes" id="UP000002512">
    <property type="component" value="Chromosome"/>
</dbReference>
<dbReference type="GO" id="GO:0003677">
    <property type="term" value="F:DNA binding"/>
    <property type="evidence" value="ECO:0007669"/>
    <property type="project" value="UniProtKB-KW"/>
</dbReference>
<dbReference type="GO" id="GO:0004519">
    <property type="term" value="F:endonuclease activity"/>
    <property type="evidence" value="ECO:0007669"/>
    <property type="project" value="UniProtKB-UniRule"/>
</dbReference>
<dbReference type="GO" id="GO:0046872">
    <property type="term" value="F:metal ion binding"/>
    <property type="evidence" value="ECO:0007669"/>
    <property type="project" value="UniProtKB-UniRule"/>
</dbReference>
<dbReference type="GO" id="GO:0003723">
    <property type="term" value="F:RNA binding"/>
    <property type="evidence" value="ECO:0007669"/>
    <property type="project" value="UniProtKB-KW"/>
</dbReference>
<dbReference type="GO" id="GO:0051607">
    <property type="term" value="P:defense response to virus"/>
    <property type="evidence" value="ECO:0007669"/>
    <property type="project" value="UniProtKB-UniRule"/>
</dbReference>
<dbReference type="GO" id="GO:0043571">
    <property type="term" value="P:maintenance of CRISPR repeat elements"/>
    <property type="evidence" value="ECO:0007669"/>
    <property type="project" value="UniProtKB-UniRule"/>
</dbReference>
<dbReference type="CDD" id="cd09643">
    <property type="entry name" value="Csn1"/>
    <property type="match status" value="1"/>
</dbReference>
<dbReference type="Gene3D" id="1.10.30.50">
    <property type="match status" value="1"/>
</dbReference>
<dbReference type="Gene3D" id="3.30.420.10">
    <property type="entry name" value="Ribonuclease H-like superfamily/Ribonuclease H"/>
    <property type="match status" value="1"/>
</dbReference>
<dbReference type="HAMAP" id="MF_01480">
    <property type="entry name" value="Cas9"/>
    <property type="match status" value="1"/>
</dbReference>
<dbReference type="InterPro" id="IPR028629">
    <property type="entry name" value="Cas9"/>
</dbReference>
<dbReference type="InterPro" id="IPR032239">
    <property type="entry name" value="Cas9-BH"/>
</dbReference>
<dbReference type="InterPro" id="IPR032237">
    <property type="entry name" value="Cas9_PI"/>
</dbReference>
<dbReference type="InterPro" id="IPR032240">
    <property type="entry name" value="Cas9_REC"/>
</dbReference>
<dbReference type="InterPro" id="IPR055228">
    <property type="entry name" value="Cas9_RuvC"/>
</dbReference>
<dbReference type="InterPro" id="IPR033114">
    <property type="entry name" value="HNH_CAS9"/>
</dbReference>
<dbReference type="InterPro" id="IPR003615">
    <property type="entry name" value="HNH_nuc"/>
</dbReference>
<dbReference type="InterPro" id="IPR036397">
    <property type="entry name" value="RNaseH_sf"/>
</dbReference>
<dbReference type="NCBIfam" id="TIGR01865">
    <property type="entry name" value="cas_Csn1"/>
    <property type="match status" value="1"/>
</dbReference>
<dbReference type="Pfam" id="PF16593">
    <property type="entry name" value="Cas9-BH"/>
    <property type="match status" value="1"/>
</dbReference>
<dbReference type="Pfam" id="PF16595">
    <property type="entry name" value="Cas9_PI"/>
    <property type="match status" value="1"/>
</dbReference>
<dbReference type="Pfam" id="PF16592">
    <property type="entry name" value="Cas9_REC"/>
    <property type="match status" value="1"/>
</dbReference>
<dbReference type="Pfam" id="PF22702">
    <property type="entry name" value="Cas9_RuvC"/>
    <property type="match status" value="1"/>
</dbReference>
<dbReference type="Pfam" id="PF13395">
    <property type="entry name" value="HNH_4"/>
    <property type="match status" value="1"/>
</dbReference>
<dbReference type="PROSITE" id="PS51749">
    <property type="entry name" value="HNH_CAS9"/>
    <property type="match status" value="1"/>
</dbReference>
<accession>Q8DTE3</accession>
<reference key="1">
    <citation type="journal article" date="2002" name="Proc. Natl. Acad. Sci. U.S.A.">
        <title>Genome sequence of Streptococcus mutans UA159, a cariogenic dental pathogen.</title>
        <authorList>
            <person name="Ajdic D.J."/>
            <person name="McShan W.M."/>
            <person name="McLaughlin R.E."/>
            <person name="Savic G."/>
            <person name="Chang J."/>
            <person name="Carson M.B."/>
            <person name="Primeaux C."/>
            <person name="Tian R."/>
            <person name="Kenton S."/>
            <person name="Jia H.G."/>
            <person name="Lin S.P."/>
            <person name="Qian Y."/>
            <person name="Li S."/>
            <person name="Zhu H."/>
            <person name="Najar F.Z."/>
            <person name="Lai H."/>
            <person name="White J."/>
            <person name="Roe B.A."/>
            <person name="Ferretti J.J."/>
        </authorList>
    </citation>
    <scope>NUCLEOTIDE SEQUENCE [LARGE SCALE GENOMIC DNA]</scope>
    <source>
        <strain>ATCC 700610 / UA159</strain>
    </source>
</reference>
<reference key="2">
    <citation type="journal article" date="2014" name="Nucleic Acids Res.">
        <title>Phylogeny of Cas9 determines functional exchangeability of dual-RNA and Cas9 among orthologous type II CRISPR-Cas systems.</title>
        <authorList>
            <person name="Fonfara I."/>
            <person name="Le Rhun A."/>
            <person name="Chylinski K."/>
            <person name="Makarova K.S."/>
            <person name="Lecrivain A.L."/>
            <person name="Bzdrenga J."/>
            <person name="Koonin E.V."/>
            <person name="Charpentier E."/>
        </authorList>
    </citation>
    <scope>FUNCTION AS AN ENDONUCLEASE</scope>
    <scope>FUNCTION IN GUIDE RNA PROCESSING</scope>
    <scope>POSSIBLE BIOTECHNOLOGY</scope>
    <source>
        <strain>ATCC 700610 / UA159</strain>
    </source>
</reference>
<reference key="3">
    <citation type="journal article" date="2023" name="Nat. Commun.">
        <title>Assessing and advancing the safety of CRISPR-Cas tools: from DNA to RNA editing.</title>
        <authorList>
            <person name="Tao J."/>
            <person name="Bauer D.E."/>
            <person name="Chiarle R."/>
        </authorList>
    </citation>
    <scope>REVIEW ON SAFETY OF GENOME EDITING TOOLS</scope>
</reference>
<proteinExistence type="evidence at protein level"/>
<name>CAS9_STRMU</name>
<organism>
    <name type="scientific">Streptococcus mutans serotype c (strain ATCC 700610 / UA159)</name>
    <dbReference type="NCBI Taxonomy" id="210007"/>
    <lineage>
        <taxon>Bacteria</taxon>
        <taxon>Bacillati</taxon>
        <taxon>Bacillota</taxon>
        <taxon>Bacilli</taxon>
        <taxon>Lactobacillales</taxon>
        <taxon>Streptococcaceae</taxon>
        <taxon>Streptococcus</taxon>
    </lineage>
</organism>
<keyword id="KW-0051">Antiviral defense</keyword>
<keyword id="KW-0238">DNA-binding</keyword>
<keyword id="KW-0255">Endonuclease</keyword>
<keyword id="KW-0378">Hydrolase</keyword>
<keyword id="KW-0460">Magnesium</keyword>
<keyword id="KW-0464">Manganese</keyword>
<keyword id="KW-0479">Metal-binding</keyword>
<keyword id="KW-0540">Nuclease</keyword>
<keyword id="KW-1185">Reference proteome</keyword>
<keyword id="KW-0694">RNA-binding</keyword>
<sequence length="1345" mass="156624">MKKPYSIGLDIGTNSVGWAVVTDDYKVPAKKMKVLGNTDKSHIEKNLLGALLFDSGNTAEDRRLKRTARRRYTRRRNRILYLQEIFSEEMGKVDDSFFHRLEDSFLVTEDKRGERHPIFGNLEEEVKYHENFPTIYHLRQYLADNPEKVDLRLVYLALAHIIKFRGHFLIEGKFDTRNNDVQRLFQEFLAVYDNTFENSSLQEQNVQVEEILTDKISKSAKKDRVLKLFPNEKSNGRFAEFLKLIVGNQADFKKHFELEEKAPLQFSKDTYEEELEVLLAQIGDNYAELFLSAKKLYDSILLSGILTVTDVGTKAPLSASMIQRYNEHQMDLAQLKQFIRQKLSDKYNEVFSDVSKDGYAGYIDGKTNQEAFYKYLKGLLNKIEGSGYFLDKIEREDFLRKQRTFDNGSIPHQIHLQEMRAIIRRQAEFYPFLADNQDRIEKLLTFRIPYYVGPLARGKSDFAWLSRKSADKITPWNFDEIVDKESSAEAFINRMTNYDLYLPNQKVLPKHSLLYEKFTVYNELTKVKYKTEQGKTAFFDANMKQEIFDGVFKVYRKVTKDKLMDFLEKEFDEFRIVDLTGLDKENKVFNASYGTYHDLCKILDKDFLDNSKNEKILEDIVLTLTLFEDREMIRKRLENYSDLLTKEQVKKLERRHYTGWGRLSAELIHGIRNKESRKTILDYLIDDGNSNRNFMQLINDDALSFKEEIAKAQVIGETDNLNQVVSDIAGSPAIKKGILQSLKIVDELVKIMGHQPENIVVEMARENQFTNQGRRNSQQRLKGLTDSIKEFGSQILKEHPVENSQLQNDRLFLYYLQNGRDMYTGEELDIDYLSQYDIDHIIPQAFIKDNSIDNRVLTSSKENRGKSDDVPSKDVVRKMKSYWSKLLSAKLITQRKFDNLTKAERGGLTDDDKAGFIKRQLVETRQITKHVARILDERFNTETDENNKKIRQVKIVTLKSNLVSNFRKEFELYKVREINDYHHAHDAYLNAVIGKALLGVYPQLEPEFVYGDYPHFHGHKENKATAKKFFYSNIMNFFKKDDVRTDKNGEIIWKKDEHISNIKKVLSYPQVNIVKKVEEQTGGFSKESILPKGNSDKLIPRKTKKFYWDTKKYGGFDSPIVAYSILVIADIEKGKSKKLKTVKALVGVTIMEKMTFERDPVAFLERKGYRNVQEENIIKLPKYSLFKLENGRKRLLASARELQKGNEIVLPNHLGTLLYHAKNIHKVDEPKHLDYVDKHKDEFKELLDVVSNFSKKYTLAEGNLEKIKELYAQNNGEDLKELASSFINLLTFTAIGAPATFKFFDKNIDRKRYTSTTEILNATLIHQSITGLYETRIDLNKLGGD</sequence>
<gene>
    <name evidence="1" type="primary">cas9</name>
    <name type="synonym">csn1</name>
    <name type="ordered locus">SMU_1405c</name>
</gene>
<protein>
    <recommendedName>
        <fullName evidence="1">CRISPR-associated endonuclease Cas9</fullName>
        <ecNumber evidence="1">3.1.-.-</ecNumber>
    </recommendedName>
</protein>
<comment type="function">
    <text evidence="1 3">CRISPR (clustered regularly interspaced short palindromic repeat) is an adaptive immune system that provides protection against mobile genetic elements (viruses, transposable elements and conjugative plasmids). CRISPR clusters contain spacers, sequences complementary to antecedent mobile elements, and target invading nucleic acids. CRISPR clusters are transcribed and processed into CRISPR RNA (crRNA). In type II CRISPR systems correct processing of pre-crRNA requires a trans-encoded small RNA (tracrRNA), endogenous ribonuclease 3 (rnc) and this protein. The tracrRNA serves as a guide for ribonuclease 3-aided processing of pre-crRNA. Subsequently Cas9/crRNA/tracrRNA endonucleolytically cleaves linear or circular dsDNA target complementary to the spacer; Cas9 is inactive in the absence of the 2 guide RNAs (gRNA). Cas9 recognizes the protospacer adjacent motif (PAM) in the CRISPR repeat sequences to help distinguish self versus nonself, as targets within the bacterial CRISPR locus do not have PAMs. PAM recognition is also required for catalytic activity (By similarity). Complements the gRNA coprocessing defect in a cas9 deletion in S.pyogenes strain 370 and cuts target plasmid in Cas9:gRNAs mixing experiments with S.thermophilus CRISPR3 from strain LMD-9.</text>
</comment>
<comment type="cofactor">
    <cofactor evidence="1">
        <name>Mg(2+)</name>
        <dbReference type="ChEBI" id="CHEBI:18420"/>
    </cofactor>
</comment>
<comment type="subunit">
    <text evidence="1">Monomer. Binds crRNA and tracrRNA.</text>
</comment>
<comment type="domain">
    <text evidence="1">Has 2 endonuclease domains. The discontinuous RuvC-like domain cleaves the target DNA noncomplementary to crRNA while the HNH nuclease domain cleaves the target DNA complementary to crRNA.</text>
</comment>
<comment type="biotechnology">
    <text evidence="5 6">The simplicity of the Cas9-gRNAs RNA-directed DNA endonuclease activity may be used to target and modify a DNA sequence of interest.</text>
</comment>
<comment type="similarity">
    <text evidence="4">Belongs to the CRISPR-associated protein Cas9 family. Subtype II-A subfamily.</text>
</comment>